<protein>
    <recommendedName>
        <fullName evidence="1 2">Protein LEG1 homolog</fullName>
    </recommendedName>
</protein>
<evidence type="ECO:0000250" key="1">
    <source>
        <dbReference type="UniProtKB" id="A5PF61"/>
    </source>
</evidence>
<evidence type="ECO:0000250" key="2">
    <source>
        <dbReference type="UniProtKB" id="Q4QRF7"/>
    </source>
</evidence>
<evidence type="ECO:0000255" key="3"/>
<evidence type="ECO:0000269" key="4">
    <source>
    </source>
</evidence>
<evidence type="ECO:0000269" key="5">
    <source>
    </source>
</evidence>
<evidence type="ECO:0000305" key="6"/>
<evidence type="ECO:0000312" key="7">
    <source>
        <dbReference type="HGNC" id="HGNC:20960"/>
    </source>
</evidence>
<name>LEG1H_HUMAN</name>
<sequence>MAFLPSWVCVLVGSFSASLAGTSNLSETEPPLWKESPGQLSDYRVENSMYIINPWVYLERMGMYKIILNQTARYFAKFAPDNEQNILWGLPLQYGWQYRTGRLADPTRRTNCGYESGDHMCISVDSWWADLNYFLSSLPFLAAVDSGVMGISSDQVRLLPPPKNERKFCYDVSSCRSSFPETMNKWNTFYQYLQSPFSKFDDLLKYLWAAHTSTLADNIKSFEDRYDYYSKAEAHFERSWVLAVDHLAAVLFPTTLIRSYKFQKGMPPRILLNTDVAPFISDFTAFQNVVLVLLNMLDNVDKSIGYLCTEKSNVYRDHSESSSRSYGNNS</sequence>
<comment type="function">
    <text evidence="1 2">May be involved in early liver development.</text>
</comment>
<comment type="interaction">
    <interactant intactId="EBI-11750531">
        <id>Q6P5S2</id>
    </interactant>
    <interactant intactId="EBI-354007">
        <id>P04083</id>
        <label>ANXA1</label>
    </interactant>
    <organismsDiffer>false</organismsDiffer>
    <experiments>3</experiments>
</comment>
<comment type="interaction">
    <interactant intactId="EBI-11750531">
        <id>Q6P5S2</id>
    </interactant>
    <interactant intactId="EBI-1049597">
        <id>P27797</id>
        <label>CALR</label>
    </interactant>
    <organismsDiffer>false</organismsDiffer>
    <experiments>3</experiments>
</comment>
<comment type="interaction">
    <interactant intactId="EBI-11750531">
        <id>Q6P5S2</id>
    </interactant>
    <interactant intactId="EBI-351007">
        <id>P36957</id>
        <label>DLST</label>
    </interactant>
    <organismsDiffer>false</organismsDiffer>
    <experiments>3</experiments>
</comment>
<comment type="interaction">
    <interactant intactId="EBI-11750531">
        <id>Q6P5S2</id>
    </interactant>
    <interactant intactId="EBI-1055945">
        <id>Q8TDX7</id>
        <label>NEK7</label>
    </interactant>
    <organismsDiffer>false</organismsDiffer>
    <experiments>3</experiments>
</comment>
<comment type="subcellular location">
    <subcellularLocation>
        <location evidence="1 2">Secreted</location>
    </subcellularLocation>
</comment>
<comment type="tissue specificity">
    <text evidence="4 5">Detected in saliva and in hypomineralized dental enamel (at protein level).</text>
</comment>
<comment type="similarity">
    <text evidence="6">Belongs to the LEG1 family.</text>
</comment>
<gene>
    <name evidence="1 2" type="primary">LEG1</name>
    <name evidence="7" type="synonym">C6orf58</name>
</gene>
<reference key="1">
    <citation type="journal article" date="2004" name="Nat. Genet.">
        <title>Complete sequencing and characterization of 21,243 full-length human cDNAs.</title>
        <authorList>
            <person name="Ota T."/>
            <person name="Suzuki Y."/>
            <person name="Nishikawa T."/>
            <person name="Otsuki T."/>
            <person name="Sugiyama T."/>
            <person name="Irie R."/>
            <person name="Wakamatsu A."/>
            <person name="Hayashi K."/>
            <person name="Sato H."/>
            <person name="Nagai K."/>
            <person name="Kimura K."/>
            <person name="Makita H."/>
            <person name="Sekine M."/>
            <person name="Obayashi M."/>
            <person name="Nishi T."/>
            <person name="Shibahara T."/>
            <person name="Tanaka T."/>
            <person name="Ishii S."/>
            <person name="Yamamoto J."/>
            <person name="Saito K."/>
            <person name="Kawai Y."/>
            <person name="Isono Y."/>
            <person name="Nakamura Y."/>
            <person name="Nagahari K."/>
            <person name="Murakami K."/>
            <person name="Yasuda T."/>
            <person name="Iwayanagi T."/>
            <person name="Wagatsuma M."/>
            <person name="Shiratori A."/>
            <person name="Sudo H."/>
            <person name="Hosoiri T."/>
            <person name="Kaku Y."/>
            <person name="Kodaira H."/>
            <person name="Kondo H."/>
            <person name="Sugawara M."/>
            <person name="Takahashi M."/>
            <person name="Kanda K."/>
            <person name="Yokoi T."/>
            <person name="Furuya T."/>
            <person name="Kikkawa E."/>
            <person name="Omura Y."/>
            <person name="Abe K."/>
            <person name="Kamihara K."/>
            <person name="Katsuta N."/>
            <person name="Sato K."/>
            <person name="Tanikawa M."/>
            <person name="Yamazaki M."/>
            <person name="Ninomiya K."/>
            <person name="Ishibashi T."/>
            <person name="Yamashita H."/>
            <person name="Murakawa K."/>
            <person name="Fujimori K."/>
            <person name="Tanai H."/>
            <person name="Kimata M."/>
            <person name="Watanabe M."/>
            <person name="Hiraoka S."/>
            <person name="Chiba Y."/>
            <person name="Ishida S."/>
            <person name="Ono Y."/>
            <person name="Takiguchi S."/>
            <person name="Watanabe S."/>
            <person name="Yosida M."/>
            <person name="Hotuta T."/>
            <person name="Kusano J."/>
            <person name="Kanehori K."/>
            <person name="Takahashi-Fujii A."/>
            <person name="Hara H."/>
            <person name="Tanase T.-O."/>
            <person name="Nomura Y."/>
            <person name="Togiya S."/>
            <person name="Komai F."/>
            <person name="Hara R."/>
            <person name="Takeuchi K."/>
            <person name="Arita M."/>
            <person name="Imose N."/>
            <person name="Musashino K."/>
            <person name="Yuuki H."/>
            <person name="Oshima A."/>
            <person name="Sasaki N."/>
            <person name="Aotsuka S."/>
            <person name="Yoshikawa Y."/>
            <person name="Matsunawa H."/>
            <person name="Ichihara T."/>
            <person name="Shiohata N."/>
            <person name="Sano S."/>
            <person name="Moriya S."/>
            <person name="Momiyama H."/>
            <person name="Satoh N."/>
            <person name="Takami S."/>
            <person name="Terashima Y."/>
            <person name="Suzuki O."/>
            <person name="Nakagawa S."/>
            <person name="Senoh A."/>
            <person name="Mizoguchi H."/>
            <person name="Goto Y."/>
            <person name="Shimizu F."/>
            <person name="Wakebe H."/>
            <person name="Hishigaki H."/>
            <person name="Watanabe T."/>
            <person name="Sugiyama A."/>
            <person name="Takemoto M."/>
            <person name="Kawakami B."/>
            <person name="Yamazaki M."/>
            <person name="Watanabe K."/>
            <person name="Kumagai A."/>
            <person name="Itakura S."/>
            <person name="Fukuzumi Y."/>
            <person name="Fujimori Y."/>
            <person name="Komiyama M."/>
            <person name="Tashiro H."/>
            <person name="Tanigami A."/>
            <person name="Fujiwara T."/>
            <person name="Ono T."/>
            <person name="Yamada K."/>
            <person name="Fujii Y."/>
            <person name="Ozaki K."/>
            <person name="Hirao M."/>
            <person name="Ohmori Y."/>
            <person name="Kawabata A."/>
            <person name="Hikiji T."/>
            <person name="Kobatake N."/>
            <person name="Inagaki H."/>
            <person name="Ikema Y."/>
            <person name="Okamoto S."/>
            <person name="Okitani R."/>
            <person name="Kawakami T."/>
            <person name="Noguchi S."/>
            <person name="Itoh T."/>
            <person name="Shigeta K."/>
            <person name="Senba T."/>
            <person name="Matsumura K."/>
            <person name="Nakajima Y."/>
            <person name="Mizuno T."/>
            <person name="Morinaga M."/>
            <person name="Sasaki M."/>
            <person name="Togashi T."/>
            <person name="Oyama M."/>
            <person name="Hata H."/>
            <person name="Watanabe M."/>
            <person name="Komatsu T."/>
            <person name="Mizushima-Sugano J."/>
            <person name="Satoh T."/>
            <person name="Shirai Y."/>
            <person name="Takahashi Y."/>
            <person name="Nakagawa K."/>
            <person name="Okumura K."/>
            <person name="Nagase T."/>
            <person name="Nomura N."/>
            <person name="Kikuchi H."/>
            <person name="Masuho Y."/>
            <person name="Yamashita R."/>
            <person name="Nakai K."/>
            <person name="Yada T."/>
            <person name="Nakamura Y."/>
            <person name="Ohara O."/>
            <person name="Isogai T."/>
            <person name="Sugano S."/>
        </authorList>
    </citation>
    <scope>NUCLEOTIDE SEQUENCE [LARGE SCALE MRNA]</scope>
    <source>
        <tissue>Trachea</tissue>
    </source>
</reference>
<reference key="2">
    <citation type="journal article" date="2003" name="Nature">
        <title>The DNA sequence and analysis of human chromosome 6.</title>
        <authorList>
            <person name="Mungall A.J."/>
            <person name="Palmer S.A."/>
            <person name="Sims S.K."/>
            <person name="Edwards C.A."/>
            <person name="Ashurst J.L."/>
            <person name="Wilming L."/>
            <person name="Jones M.C."/>
            <person name="Horton R."/>
            <person name="Hunt S.E."/>
            <person name="Scott C.E."/>
            <person name="Gilbert J.G.R."/>
            <person name="Clamp M.E."/>
            <person name="Bethel G."/>
            <person name="Milne S."/>
            <person name="Ainscough R."/>
            <person name="Almeida J.P."/>
            <person name="Ambrose K.D."/>
            <person name="Andrews T.D."/>
            <person name="Ashwell R.I.S."/>
            <person name="Babbage A.K."/>
            <person name="Bagguley C.L."/>
            <person name="Bailey J."/>
            <person name="Banerjee R."/>
            <person name="Barker D.J."/>
            <person name="Barlow K.F."/>
            <person name="Bates K."/>
            <person name="Beare D.M."/>
            <person name="Beasley H."/>
            <person name="Beasley O."/>
            <person name="Bird C.P."/>
            <person name="Blakey S.E."/>
            <person name="Bray-Allen S."/>
            <person name="Brook J."/>
            <person name="Brown A.J."/>
            <person name="Brown J.Y."/>
            <person name="Burford D.C."/>
            <person name="Burrill W."/>
            <person name="Burton J."/>
            <person name="Carder C."/>
            <person name="Carter N.P."/>
            <person name="Chapman J.C."/>
            <person name="Clark S.Y."/>
            <person name="Clark G."/>
            <person name="Clee C.M."/>
            <person name="Clegg S."/>
            <person name="Cobley V."/>
            <person name="Collier R.E."/>
            <person name="Collins J.E."/>
            <person name="Colman L.K."/>
            <person name="Corby N.R."/>
            <person name="Coville G.J."/>
            <person name="Culley K.M."/>
            <person name="Dhami P."/>
            <person name="Davies J."/>
            <person name="Dunn M."/>
            <person name="Earthrowl M.E."/>
            <person name="Ellington A.E."/>
            <person name="Evans K.A."/>
            <person name="Faulkner L."/>
            <person name="Francis M.D."/>
            <person name="Frankish A."/>
            <person name="Frankland J."/>
            <person name="French L."/>
            <person name="Garner P."/>
            <person name="Garnett J."/>
            <person name="Ghori M.J."/>
            <person name="Gilby L.M."/>
            <person name="Gillson C.J."/>
            <person name="Glithero R.J."/>
            <person name="Grafham D.V."/>
            <person name="Grant M."/>
            <person name="Gribble S."/>
            <person name="Griffiths C."/>
            <person name="Griffiths M.N.D."/>
            <person name="Hall R."/>
            <person name="Halls K.S."/>
            <person name="Hammond S."/>
            <person name="Harley J.L."/>
            <person name="Hart E.A."/>
            <person name="Heath P.D."/>
            <person name="Heathcott R."/>
            <person name="Holmes S.J."/>
            <person name="Howden P.J."/>
            <person name="Howe K.L."/>
            <person name="Howell G.R."/>
            <person name="Huckle E."/>
            <person name="Humphray S.J."/>
            <person name="Humphries M.D."/>
            <person name="Hunt A.R."/>
            <person name="Johnson C.M."/>
            <person name="Joy A.A."/>
            <person name="Kay M."/>
            <person name="Keenan S.J."/>
            <person name="Kimberley A.M."/>
            <person name="King A."/>
            <person name="Laird G.K."/>
            <person name="Langford C."/>
            <person name="Lawlor S."/>
            <person name="Leongamornlert D.A."/>
            <person name="Leversha M."/>
            <person name="Lloyd C.R."/>
            <person name="Lloyd D.M."/>
            <person name="Loveland J.E."/>
            <person name="Lovell J."/>
            <person name="Martin S."/>
            <person name="Mashreghi-Mohammadi M."/>
            <person name="Maslen G.L."/>
            <person name="Matthews L."/>
            <person name="McCann O.T."/>
            <person name="McLaren S.J."/>
            <person name="McLay K."/>
            <person name="McMurray A."/>
            <person name="Moore M.J.F."/>
            <person name="Mullikin J.C."/>
            <person name="Niblett D."/>
            <person name="Nickerson T."/>
            <person name="Novik K.L."/>
            <person name="Oliver K."/>
            <person name="Overton-Larty E.K."/>
            <person name="Parker A."/>
            <person name="Patel R."/>
            <person name="Pearce A.V."/>
            <person name="Peck A.I."/>
            <person name="Phillimore B.J.C.T."/>
            <person name="Phillips S."/>
            <person name="Plumb R.W."/>
            <person name="Porter K.M."/>
            <person name="Ramsey Y."/>
            <person name="Ranby S.A."/>
            <person name="Rice C.M."/>
            <person name="Ross M.T."/>
            <person name="Searle S.M."/>
            <person name="Sehra H.K."/>
            <person name="Sheridan E."/>
            <person name="Skuce C.D."/>
            <person name="Smith S."/>
            <person name="Smith M."/>
            <person name="Spraggon L."/>
            <person name="Squares S.L."/>
            <person name="Steward C.A."/>
            <person name="Sycamore N."/>
            <person name="Tamlyn-Hall G."/>
            <person name="Tester J."/>
            <person name="Theaker A.J."/>
            <person name="Thomas D.W."/>
            <person name="Thorpe A."/>
            <person name="Tracey A."/>
            <person name="Tromans A."/>
            <person name="Tubby B."/>
            <person name="Wall M."/>
            <person name="Wallis J.M."/>
            <person name="West A.P."/>
            <person name="White S.S."/>
            <person name="Whitehead S.L."/>
            <person name="Whittaker H."/>
            <person name="Wild A."/>
            <person name="Willey D.J."/>
            <person name="Wilmer T.E."/>
            <person name="Wood J.M."/>
            <person name="Wray P.W."/>
            <person name="Wyatt J.C."/>
            <person name="Young L."/>
            <person name="Younger R.M."/>
            <person name="Bentley D.R."/>
            <person name="Coulson A."/>
            <person name="Durbin R.M."/>
            <person name="Hubbard T."/>
            <person name="Sulston J.E."/>
            <person name="Dunham I."/>
            <person name="Rogers J."/>
            <person name="Beck S."/>
        </authorList>
    </citation>
    <scope>NUCLEOTIDE SEQUENCE [LARGE SCALE GENOMIC DNA]</scope>
</reference>
<reference key="3">
    <citation type="submission" date="2005-09" db="EMBL/GenBank/DDBJ databases">
        <authorList>
            <person name="Mural R.J."/>
            <person name="Istrail S."/>
            <person name="Sutton G.G."/>
            <person name="Florea L."/>
            <person name="Halpern A.L."/>
            <person name="Mobarry C.M."/>
            <person name="Lippert R."/>
            <person name="Walenz B."/>
            <person name="Shatkay H."/>
            <person name="Dew I."/>
            <person name="Miller J.R."/>
            <person name="Flanigan M.J."/>
            <person name="Edwards N.J."/>
            <person name="Bolanos R."/>
            <person name="Fasulo D."/>
            <person name="Halldorsson B.V."/>
            <person name="Hannenhalli S."/>
            <person name="Turner R."/>
            <person name="Yooseph S."/>
            <person name="Lu F."/>
            <person name="Nusskern D.R."/>
            <person name="Shue B.C."/>
            <person name="Zheng X.H."/>
            <person name="Zhong F."/>
            <person name="Delcher A.L."/>
            <person name="Huson D.H."/>
            <person name="Kravitz S.A."/>
            <person name="Mouchard L."/>
            <person name="Reinert K."/>
            <person name="Remington K.A."/>
            <person name="Clark A.G."/>
            <person name="Waterman M.S."/>
            <person name="Eichler E.E."/>
            <person name="Adams M.D."/>
            <person name="Hunkapiller M.W."/>
            <person name="Myers E.W."/>
            <person name="Venter J.C."/>
        </authorList>
    </citation>
    <scope>NUCLEOTIDE SEQUENCE [LARGE SCALE GENOMIC DNA]</scope>
</reference>
<reference key="4">
    <citation type="journal article" date="2004" name="Genome Res.">
        <title>The status, quality, and expansion of the NIH full-length cDNA project: the Mammalian Gene Collection (MGC).</title>
        <authorList>
            <consortium name="The MGC Project Team"/>
        </authorList>
    </citation>
    <scope>NUCLEOTIDE SEQUENCE [LARGE SCALE MRNA]</scope>
</reference>
<reference key="5">
    <citation type="journal article" date="2006" name="J. Proteome Res.">
        <title>Identification of N-linked glycoproteins in human saliva by glycoprotein capture and mass spectrometry.</title>
        <authorList>
            <person name="Ramachandran P."/>
            <person name="Boontheung P."/>
            <person name="Xie Y."/>
            <person name="Sondej M."/>
            <person name="Wong D.T."/>
            <person name="Loo J.A."/>
        </authorList>
    </citation>
    <scope>GLYCOSYLATION [LARGE SCALE ANALYSIS] AT ASN-69</scope>
    <scope>TISSUE SPECIFICITY</scope>
    <source>
        <tissue>Saliva</tissue>
    </source>
</reference>
<reference key="6">
    <citation type="journal article" date="2010" name="J. Dent. Res.">
        <title>Surface integrity governs the proteome of hypomineralized enamel.</title>
        <authorList>
            <person name="Mangum J.E."/>
            <person name="Crombie F.A."/>
            <person name="Kilpatrick N."/>
            <person name="Manton D.J."/>
            <person name="Hubbard M.J."/>
        </authorList>
    </citation>
    <scope>IDENTIFICATION BY MASS SPECTROMETRY</scope>
    <scope>TISSUE SPECIFICITY</scope>
</reference>
<dbReference type="EMBL" id="AK303850">
    <property type="protein sequence ID" value="BAG64792.1"/>
    <property type="molecule type" value="mRNA"/>
</dbReference>
<dbReference type="EMBL" id="AL583806">
    <property type="status" value="NOT_ANNOTATED_CDS"/>
    <property type="molecule type" value="Genomic_DNA"/>
</dbReference>
<dbReference type="EMBL" id="CH471051">
    <property type="protein sequence ID" value="EAW48094.1"/>
    <property type="molecule type" value="Genomic_DNA"/>
</dbReference>
<dbReference type="EMBL" id="BC062712">
    <property type="protein sequence ID" value="AAH62712.2"/>
    <property type="molecule type" value="mRNA"/>
</dbReference>
<dbReference type="CCDS" id="CCDS34533.1"/>
<dbReference type="RefSeq" id="NP_001010905.1">
    <property type="nucleotide sequence ID" value="NM_001010905.2"/>
</dbReference>
<dbReference type="SMR" id="Q6P5S2"/>
<dbReference type="BioGRID" id="131603">
    <property type="interactions" value="24"/>
</dbReference>
<dbReference type="FunCoup" id="Q6P5S2">
    <property type="interactions" value="190"/>
</dbReference>
<dbReference type="IntAct" id="Q6P5S2">
    <property type="interactions" value="18"/>
</dbReference>
<dbReference type="STRING" id="9606.ENSP00000328069"/>
<dbReference type="GlyCosmos" id="Q6P5S2">
    <property type="glycosylation" value="3 sites, 1 glycan"/>
</dbReference>
<dbReference type="GlyGen" id="Q6P5S2">
    <property type="glycosylation" value="3 sites, 1 N-linked glycan (1 site), 1 O-linked glycan (1 site)"/>
</dbReference>
<dbReference type="iPTMnet" id="Q6P5S2"/>
<dbReference type="PhosphoSitePlus" id="Q6P5S2"/>
<dbReference type="BioMuta" id="C6orf58"/>
<dbReference type="DMDM" id="74749125"/>
<dbReference type="jPOST" id="Q6P5S2"/>
<dbReference type="MassIVE" id="Q6P5S2"/>
<dbReference type="PaxDb" id="9606-ENSP00000328069"/>
<dbReference type="PeptideAtlas" id="Q6P5S2"/>
<dbReference type="PRIDE" id="Q6P5S2"/>
<dbReference type="ProteomicsDB" id="67003"/>
<dbReference type="Antibodypedia" id="49859">
    <property type="antibodies" value="157 antibodies from 16 providers"/>
</dbReference>
<dbReference type="DNASU" id="352999"/>
<dbReference type="Ensembl" id="ENST00000329722.8">
    <property type="protein sequence ID" value="ENSP00000328069.7"/>
    <property type="gene ID" value="ENSG00000184530.9"/>
</dbReference>
<dbReference type="GeneID" id="352999"/>
<dbReference type="KEGG" id="hsa:352999"/>
<dbReference type="MANE-Select" id="ENST00000329722.8">
    <property type="protein sequence ID" value="ENSP00000328069.7"/>
    <property type="RefSeq nucleotide sequence ID" value="NM_001010905.3"/>
    <property type="RefSeq protein sequence ID" value="NP_001010905.1"/>
</dbReference>
<dbReference type="UCSC" id="uc003qbh.5">
    <property type="organism name" value="human"/>
</dbReference>
<dbReference type="AGR" id="HGNC:20960"/>
<dbReference type="CTD" id="352999"/>
<dbReference type="DisGeNET" id="352999"/>
<dbReference type="GeneCards" id="C6orf58"/>
<dbReference type="HGNC" id="HGNC:20960">
    <property type="gene designation" value="C6orf58"/>
</dbReference>
<dbReference type="HPA" id="ENSG00000184530">
    <property type="expression patterns" value="Group enriched (intestine, salivary gland)"/>
</dbReference>
<dbReference type="neXtProt" id="NX_Q6P5S2"/>
<dbReference type="OpenTargets" id="ENSG00000184530"/>
<dbReference type="PharmGKB" id="PA134881952"/>
<dbReference type="VEuPathDB" id="HostDB:ENSG00000184530"/>
<dbReference type="eggNOG" id="ENOG502QVPP">
    <property type="taxonomic scope" value="Eukaryota"/>
</dbReference>
<dbReference type="GeneTree" id="ENSGT00390000004904"/>
<dbReference type="HOGENOM" id="CLU_071068_0_0_1"/>
<dbReference type="InParanoid" id="Q6P5S2"/>
<dbReference type="OMA" id="PKLMDDW"/>
<dbReference type="OrthoDB" id="17046at2759"/>
<dbReference type="PAN-GO" id="Q6P5S2">
    <property type="GO annotations" value="1 GO annotation based on evolutionary models"/>
</dbReference>
<dbReference type="PhylomeDB" id="Q6P5S2"/>
<dbReference type="TreeFam" id="TF332991"/>
<dbReference type="PathwayCommons" id="Q6P5S2"/>
<dbReference type="SignaLink" id="Q6P5S2"/>
<dbReference type="BioGRID-ORCS" id="352999">
    <property type="hits" value="4 hits in 1129 CRISPR screens"/>
</dbReference>
<dbReference type="ChiTaRS" id="C6orf58">
    <property type="organism name" value="human"/>
</dbReference>
<dbReference type="GeneWiki" id="C6orf58"/>
<dbReference type="GenomeRNAi" id="352999"/>
<dbReference type="Pharos" id="Q6P5S2">
    <property type="development level" value="Tbio"/>
</dbReference>
<dbReference type="PRO" id="PR:Q6P5S2"/>
<dbReference type="Proteomes" id="UP000005640">
    <property type="component" value="Chromosome 6"/>
</dbReference>
<dbReference type="RNAct" id="Q6P5S2">
    <property type="molecule type" value="protein"/>
</dbReference>
<dbReference type="Bgee" id="ENSG00000184530">
    <property type="expression patterns" value="Expressed in trachea and 104 other cell types or tissues"/>
</dbReference>
<dbReference type="GO" id="GO:0070062">
    <property type="term" value="C:extracellular exosome"/>
    <property type="evidence" value="ECO:0007005"/>
    <property type="project" value="UniProtKB"/>
</dbReference>
<dbReference type="GO" id="GO:0005615">
    <property type="term" value="C:extracellular space"/>
    <property type="evidence" value="ECO:0000314"/>
    <property type="project" value="UniProtKB"/>
</dbReference>
<dbReference type="InterPro" id="IPR008499">
    <property type="entry name" value="Leg1"/>
</dbReference>
<dbReference type="PANTHER" id="PTHR18820">
    <property type="entry name" value="LEG1"/>
    <property type="match status" value="1"/>
</dbReference>
<dbReference type="PANTHER" id="PTHR18820:SF1">
    <property type="entry name" value="PROTEIN LEG1 HOMOLOG"/>
    <property type="match status" value="1"/>
</dbReference>
<dbReference type="Pfam" id="PF05612">
    <property type="entry name" value="Leg1"/>
    <property type="match status" value="1"/>
</dbReference>
<keyword id="KW-0217">Developmental protein</keyword>
<keyword id="KW-0325">Glycoprotein</keyword>
<keyword id="KW-1267">Proteomics identification</keyword>
<keyword id="KW-1185">Reference proteome</keyword>
<keyword id="KW-0964">Secreted</keyword>
<keyword id="KW-0732">Signal</keyword>
<feature type="signal peptide" evidence="3">
    <location>
        <begin position="1"/>
        <end position="20"/>
    </location>
</feature>
<feature type="chain" id="PRO_0000252385" description="Protein LEG1 homolog">
    <location>
        <begin position="21"/>
        <end position="330"/>
    </location>
</feature>
<feature type="glycosylation site" description="N-linked (GlcNAc...) asparagine" evidence="3">
    <location>
        <position position="24"/>
    </location>
</feature>
<feature type="glycosylation site" description="N-linked (GlcNAc...) asparagine" evidence="4">
    <location>
        <position position="69"/>
    </location>
</feature>
<feature type="sequence variant" id="VAR_033675" description="In dbSNP:rs9491833.">
    <original>C</original>
    <variation>G</variation>
    <location>
        <position position="308"/>
    </location>
</feature>
<proteinExistence type="evidence at protein level"/>
<organism>
    <name type="scientific">Homo sapiens</name>
    <name type="common">Human</name>
    <dbReference type="NCBI Taxonomy" id="9606"/>
    <lineage>
        <taxon>Eukaryota</taxon>
        <taxon>Metazoa</taxon>
        <taxon>Chordata</taxon>
        <taxon>Craniata</taxon>
        <taxon>Vertebrata</taxon>
        <taxon>Euteleostomi</taxon>
        <taxon>Mammalia</taxon>
        <taxon>Eutheria</taxon>
        <taxon>Euarchontoglires</taxon>
        <taxon>Primates</taxon>
        <taxon>Haplorrhini</taxon>
        <taxon>Catarrhini</taxon>
        <taxon>Hominidae</taxon>
        <taxon>Homo</taxon>
    </lineage>
</organism>
<accession>Q6P5S2</accession>
<accession>B4E1I0</accession>
<accession>Q5VUP2</accession>